<reference key="1">
    <citation type="journal article" date="2002" name="Photosyn. Res.">
        <title>Transcription of three sets of genes coding for the core light-harvesting proteins in the purple sulfur bacterium, Allochromatium vinosum.</title>
        <authorList>
            <person name="Nagashima S."/>
            <person name="Shimada K."/>
            <person name="Matsuura K."/>
            <person name="Nagashima K.V.P."/>
        </authorList>
    </citation>
    <scope>NUCLEOTIDE SEQUENCE [GENOMIC DNA]</scope>
</reference>
<reference key="2">
    <citation type="journal article" date="2011" name="Stand. Genomic Sci.">
        <title>Complete genome sequence of Allochromatium vinosum DSM 180(T).</title>
        <authorList>
            <person name="Weissgerber T."/>
            <person name="Zigann R."/>
            <person name="Bruce D."/>
            <person name="Chang Y.J."/>
            <person name="Detter J.C."/>
            <person name="Han C."/>
            <person name="Hauser L."/>
            <person name="Jeffries C.D."/>
            <person name="Land M."/>
            <person name="Munk A.C."/>
            <person name="Tapia R."/>
            <person name="Dahl C."/>
        </authorList>
    </citation>
    <scope>NUCLEOTIDE SEQUENCE [LARGE SCALE GENOMIC DNA]</scope>
    <source>
        <strain>ATCC 17899 / DSM 180 / NBRC 103801 / NCIMB 10441 / D</strain>
    </source>
</reference>
<dbReference type="EMBL" id="AB050620">
    <property type="protein sequence ID" value="BAB44150.1"/>
    <property type="molecule type" value="Genomic_DNA"/>
</dbReference>
<dbReference type="EMBL" id="CP001896">
    <property type="protein sequence ID" value="ADC63455.1"/>
    <property type="molecule type" value="Genomic_DNA"/>
</dbReference>
<dbReference type="RefSeq" id="WP_012971724.1">
    <property type="nucleotide sequence ID" value="NC_013851.1"/>
</dbReference>
<dbReference type="SMR" id="Q93UZ0"/>
<dbReference type="STRING" id="572477.Alvin_2545"/>
<dbReference type="KEGG" id="alv:Alvin_2545"/>
<dbReference type="eggNOG" id="COG1850">
    <property type="taxonomic scope" value="Bacteria"/>
</dbReference>
<dbReference type="HOGENOM" id="CLU_031450_3_1_6"/>
<dbReference type="OrthoDB" id="9770811at2"/>
<dbReference type="Proteomes" id="UP000001441">
    <property type="component" value="Chromosome"/>
</dbReference>
<dbReference type="GO" id="GO:0000287">
    <property type="term" value="F:magnesium ion binding"/>
    <property type="evidence" value="ECO:0007669"/>
    <property type="project" value="InterPro"/>
</dbReference>
<dbReference type="GO" id="GO:0016984">
    <property type="term" value="F:ribulose-bisphosphate carboxylase activity"/>
    <property type="evidence" value="ECO:0007669"/>
    <property type="project" value="InterPro"/>
</dbReference>
<dbReference type="GO" id="GO:0015977">
    <property type="term" value="P:carbon fixation"/>
    <property type="evidence" value="ECO:0007669"/>
    <property type="project" value="InterPro"/>
</dbReference>
<dbReference type="CDD" id="cd08208">
    <property type="entry name" value="RLP_Photo"/>
    <property type="match status" value="1"/>
</dbReference>
<dbReference type="Gene3D" id="3.20.20.110">
    <property type="entry name" value="Ribulose bisphosphate carboxylase, large subunit, C-terminal domain"/>
    <property type="match status" value="1"/>
</dbReference>
<dbReference type="Gene3D" id="3.30.70.150">
    <property type="entry name" value="RuBisCO large subunit, N-terminal domain"/>
    <property type="match status" value="1"/>
</dbReference>
<dbReference type="InterPro" id="IPR033966">
    <property type="entry name" value="RuBisCO"/>
</dbReference>
<dbReference type="InterPro" id="IPR000685">
    <property type="entry name" value="RuBisCO_lsu_C"/>
</dbReference>
<dbReference type="InterPro" id="IPR036376">
    <property type="entry name" value="RuBisCO_lsu_C_sf"/>
</dbReference>
<dbReference type="InterPro" id="IPR036422">
    <property type="entry name" value="RuBisCO_lsu_N_sf"/>
</dbReference>
<dbReference type="PANTHER" id="PTHR42704">
    <property type="entry name" value="RIBULOSE BISPHOSPHATE CARBOXYLASE"/>
    <property type="match status" value="1"/>
</dbReference>
<dbReference type="PANTHER" id="PTHR42704:SF17">
    <property type="entry name" value="RIBULOSE BISPHOSPHATE CARBOXYLASE LARGE CHAIN"/>
    <property type="match status" value="1"/>
</dbReference>
<dbReference type="Pfam" id="PF00016">
    <property type="entry name" value="RuBisCO_large"/>
    <property type="match status" value="1"/>
</dbReference>
<dbReference type="SFLD" id="SFLDS00014">
    <property type="entry name" value="RuBisCO"/>
    <property type="match status" value="1"/>
</dbReference>
<dbReference type="SFLD" id="SFLDG00301">
    <property type="entry name" value="RuBisCO-like_proteins"/>
    <property type="match status" value="1"/>
</dbReference>
<dbReference type="SUPFAM" id="SSF51649">
    <property type="entry name" value="RuBisCo, C-terminal domain"/>
    <property type="match status" value="1"/>
</dbReference>
<dbReference type="SUPFAM" id="SSF54966">
    <property type="entry name" value="RuBisCO, large subunit, small (N-terminal) domain"/>
    <property type="match status" value="1"/>
</dbReference>
<protein>
    <recommendedName>
        <fullName>Ribulose bisphosphate carboxylase-like protein</fullName>
        <shortName>RuBisCO-like protein</shortName>
    </recommendedName>
</protein>
<feature type="chain" id="PRO_0000062681" description="Ribulose bisphosphate carboxylase-like protein">
    <location>
        <begin position="1"/>
        <end position="457"/>
    </location>
</feature>
<feature type="region of interest" description="Disordered" evidence="3">
    <location>
        <begin position="426"/>
        <end position="457"/>
    </location>
</feature>
<feature type="binding site" description="via carbamate group" evidence="2">
    <location>
        <position position="199"/>
    </location>
    <ligand>
        <name>Mg(2+)</name>
        <dbReference type="ChEBI" id="CHEBI:18420"/>
    </ligand>
</feature>
<feature type="binding site" evidence="1">
    <location>
        <position position="201"/>
    </location>
    <ligand>
        <name>Mg(2+)</name>
        <dbReference type="ChEBI" id="CHEBI:18420"/>
    </ligand>
</feature>
<feature type="binding site" evidence="1">
    <location>
        <position position="202"/>
    </location>
    <ligand>
        <name>Mg(2+)</name>
        <dbReference type="ChEBI" id="CHEBI:18420"/>
    </ligand>
</feature>
<feature type="modified residue" description="N6-carboxylysine" evidence="2">
    <location>
        <position position="199"/>
    </location>
</feature>
<accession>Q93UZ0</accession>
<accession>D3RP65</accession>
<proteinExistence type="inferred from homology"/>
<name>RBLL_ALLVD</name>
<comment type="function">
    <text evidence="1">May be involved in sulfur metabolism and oxidative stress response. Does not show RuBisCO activity (By similarity).</text>
</comment>
<comment type="cofactor">
    <cofactor evidence="1">
        <name>Mg(2+)</name>
        <dbReference type="ChEBI" id="CHEBI:18420"/>
    </cofactor>
    <text evidence="1">Binds 1 Mg(2+) ion per subunit.</text>
</comment>
<comment type="similarity">
    <text evidence="4">Belongs to the RuBisCO large chain family. Type IV subfamily.</text>
</comment>
<sequence length="457" mass="49562">MTASDWAGFFADEASLDREAYLFLDYYLECSGDPELAAAHFCSEQSTAQWRRVGSDEDLRPRFGARVVDLQILDGARPEFSYGVGSGSDAPVTACRLRIAHPHGNFGPRLPNLLSAICGEGTFFSPGAPIVKLLDIEFPESYLACFQGPQFGVAGLRERLQVHDRPIFFGVIKPNIGLPPEAFSELGHESWLGGLDIAKDDEMLADTDWCPLDRRAELLGEARRRAEAATGVPKIYLANITDEVDRLVELHDRAVERGANALLINAMPTGLSAVRMLRKHAQVPLMAHFPFIAPFARLERFGVHTRVFTKLQRLAGYDVIIMPGFGPRMHMTDDEVRACATACLEPMGPIKPSLPVPGGSDWAGTLRPLYEKLGTVDFGFVPGRGVFGHPMGPRAGAASIRQAWEAIVAGETLEERAKRHPELSAAIAAFGKPAHGQAASPQPSEQASEPDAAGGDS</sequence>
<keyword id="KW-0460">Magnesium</keyword>
<keyword id="KW-0479">Metal-binding</keyword>
<keyword id="KW-1185">Reference proteome</keyword>
<organism>
    <name type="scientific">Allochromatium vinosum (strain ATCC 17899 / DSM 180 / NBRC 103801 / NCIMB 10441 / D)</name>
    <name type="common">Chromatium vinosum</name>
    <dbReference type="NCBI Taxonomy" id="572477"/>
    <lineage>
        <taxon>Bacteria</taxon>
        <taxon>Pseudomonadati</taxon>
        <taxon>Pseudomonadota</taxon>
        <taxon>Gammaproteobacteria</taxon>
        <taxon>Chromatiales</taxon>
        <taxon>Chromatiaceae</taxon>
        <taxon>Allochromatium</taxon>
    </lineage>
</organism>
<gene>
    <name type="ordered locus">Alvin_2545</name>
    <name type="ORF">ORF457</name>
</gene>
<evidence type="ECO:0000250" key="1"/>
<evidence type="ECO:0000255" key="2"/>
<evidence type="ECO:0000256" key="3">
    <source>
        <dbReference type="SAM" id="MobiDB-lite"/>
    </source>
</evidence>
<evidence type="ECO:0000305" key="4"/>